<accession>A6W7V6</accession>
<keyword id="KW-1185">Reference proteome</keyword>
<evidence type="ECO:0000255" key="1">
    <source>
        <dbReference type="HAMAP-Rule" id="MF_00048"/>
    </source>
</evidence>
<organism>
    <name type="scientific">Kineococcus radiotolerans (strain ATCC BAA-149 / DSM 14245 / SRS30216)</name>
    <dbReference type="NCBI Taxonomy" id="266940"/>
    <lineage>
        <taxon>Bacteria</taxon>
        <taxon>Bacillati</taxon>
        <taxon>Actinomycetota</taxon>
        <taxon>Actinomycetes</taxon>
        <taxon>Kineosporiales</taxon>
        <taxon>Kineosporiaceae</taxon>
        <taxon>Kineococcus</taxon>
    </lineage>
</organism>
<gene>
    <name type="ordered locus">Krad_1407</name>
</gene>
<reference key="1">
    <citation type="journal article" date="2008" name="PLoS ONE">
        <title>Survival in nuclear waste, extreme resistance, and potential applications gleaned from the genome sequence of Kineococcus radiotolerans SRS30216.</title>
        <authorList>
            <person name="Bagwell C.E."/>
            <person name="Bhat S."/>
            <person name="Hawkins G.M."/>
            <person name="Smith B.W."/>
            <person name="Biswas T."/>
            <person name="Hoover T.R."/>
            <person name="Saunders E."/>
            <person name="Han C.S."/>
            <person name="Tsodikov O.V."/>
            <person name="Shimkets L.J."/>
        </authorList>
    </citation>
    <scope>NUCLEOTIDE SEQUENCE [LARGE SCALE GENOMIC DNA]</scope>
    <source>
        <strain>ATCC BAA-149 / DSM 14245 / SRS30216</strain>
    </source>
</reference>
<protein>
    <recommendedName>
        <fullName evidence="1">UPF0102 protein Krad_1407</fullName>
    </recommendedName>
</protein>
<proteinExistence type="inferred from homology"/>
<sequence length="122" mass="13245">MVHVRAKDAVGQYGERVAVRRLTEAGMTVLDRNWRCRSGEIDVVARDGDCLVVCEVKTRRSVSAGTALEAVTPQKLARLRRLTGEWLAAHPGVNPPRVRLDVVAVTVPERGPATVQHVAGVS</sequence>
<feature type="chain" id="PRO_0000336192" description="UPF0102 protein Krad_1407">
    <location>
        <begin position="1"/>
        <end position="122"/>
    </location>
</feature>
<name>Y1407_KINRD</name>
<dbReference type="EMBL" id="CP000750">
    <property type="protein sequence ID" value="ABS02895.1"/>
    <property type="molecule type" value="Genomic_DNA"/>
</dbReference>
<dbReference type="SMR" id="A6W7V6"/>
<dbReference type="STRING" id="266940.Krad_1407"/>
<dbReference type="KEGG" id="kra:Krad_1407"/>
<dbReference type="eggNOG" id="COG0792">
    <property type="taxonomic scope" value="Bacteria"/>
</dbReference>
<dbReference type="HOGENOM" id="CLU_115353_2_3_11"/>
<dbReference type="OrthoDB" id="9794876at2"/>
<dbReference type="Proteomes" id="UP000001116">
    <property type="component" value="Chromosome"/>
</dbReference>
<dbReference type="GO" id="GO:0003676">
    <property type="term" value="F:nucleic acid binding"/>
    <property type="evidence" value="ECO:0007669"/>
    <property type="project" value="InterPro"/>
</dbReference>
<dbReference type="CDD" id="cd20736">
    <property type="entry name" value="PoNe_Nuclease"/>
    <property type="match status" value="1"/>
</dbReference>
<dbReference type="Gene3D" id="3.40.1350.10">
    <property type="match status" value="1"/>
</dbReference>
<dbReference type="HAMAP" id="MF_00048">
    <property type="entry name" value="UPF0102"/>
    <property type="match status" value="1"/>
</dbReference>
<dbReference type="InterPro" id="IPR011335">
    <property type="entry name" value="Restrct_endonuc-II-like"/>
</dbReference>
<dbReference type="InterPro" id="IPR011856">
    <property type="entry name" value="tRNA_endonuc-like_dom_sf"/>
</dbReference>
<dbReference type="InterPro" id="IPR003509">
    <property type="entry name" value="UPF0102_YraN-like"/>
</dbReference>
<dbReference type="NCBIfam" id="NF009150">
    <property type="entry name" value="PRK12497.1-3"/>
    <property type="match status" value="1"/>
</dbReference>
<dbReference type="NCBIfam" id="NF009154">
    <property type="entry name" value="PRK12497.3-3"/>
    <property type="match status" value="1"/>
</dbReference>
<dbReference type="PANTHER" id="PTHR34039">
    <property type="entry name" value="UPF0102 PROTEIN YRAN"/>
    <property type="match status" value="1"/>
</dbReference>
<dbReference type="PANTHER" id="PTHR34039:SF1">
    <property type="entry name" value="UPF0102 PROTEIN YRAN"/>
    <property type="match status" value="1"/>
</dbReference>
<dbReference type="Pfam" id="PF02021">
    <property type="entry name" value="UPF0102"/>
    <property type="match status" value="1"/>
</dbReference>
<dbReference type="SUPFAM" id="SSF52980">
    <property type="entry name" value="Restriction endonuclease-like"/>
    <property type="match status" value="1"/>
</dbReference>
<comment type="similarity">
    <text evidence="1">Belongs to the UPF0102 family.</text>
</comment>